<reference key="1">
    <citation type="journal article" date="2000" name="Nature">
        <title>Sequence and analysis of chromosome 1 of the plant Arabidopsis thaliana.</title>
        <authorList>
            <person name="Theologis A."/>
            <person name="Ecker J.R."/>
            <person name="Palm C.J."/>
            <person name="Federspiel N.A."/>
            <person name="Kaul S."/>
            <person name="White O."/>
            <person name="Alonso J."/>
            <person name="Altafi H."/>
            <person name="Araujo R."/>
            <person name="Bowman C.L."/>
            <person name="Brooks S.Y."/>
            <person name="Buehler E."/>
            <person name="Chan A."/>
            <person name="Chao Q."/>
            <person name="Chen H."/>
            <person name="Cheuk R.F."/>
            <person name="Chin C.W."/>
            <person name="Chung M.K."/>
            <person name="Conn L."/>
            <person name="Conway A.B."/>
            <person name="Conway A.R."/>
            <person name="Creasy T.H."/>
            <person name="Dewar K."/>
            <person name="Dunn P."/>
            <person name="Etgu P."/>
            <person name="Feldblyum T.V."/>
            <person name="Feng J.-D."/>
            <person name="Fong B."/>
            <person name="Fujii C.Y."/>
            <person name="Gill J.E."/>
            <person name="Goldsmith A.D."/>
            <person name="Haas B."/>
            <person name="Hansen N.F."/>
            <person name="Hughes B."/>
            <person name="Huizar L."/>
            <person name="Hunter J.L."/>
            <person name="Jenkins J."/>
            <person name="Johnson-Hopson C."/>
            <person name="Khan S."/>
            <person name="Khaykin E."/>
            <person name="Kim C.J."/>
            <person name="Koo H.L."/>
            <person name="Kremenetskaia I."/>
            <person name="Kurtz D.B."/>
            <person name="Kwan A."/>
            <person name="Lam B."/>
            <person name="Langin-Hooper S."/>
            <person name="Lee A."/>
            <person name="Lee J.M."/>
            <person name="Lenz C.A."/>
            <person name="Li J.H."/>
            <person name="Li Y.-P."/>
            <person name="Lin X."/>
            <person name="Liu S.X."/>
            <person name="Liu Z.A."/>
            <person name="Luros J.S."/>
            <person name="Maiti R."/>
            <person name="Marziali A."/>
            <person name="Militscher J."/>
            <person name="Miranda M."/>
            <person name="Nguyen M."/>
            <person name="Nierman W.C."/>
            <person name="Osborne B.I."/>
            <person name="Pai G."/>
            <person name="Peterson J."/>
            <person name="Pham P.K."/>
            <person name="Rizzo M."/>
            <person name="Rooney T."/>
            <person name="Rowley D."/>
            <person name="Sakano H."/>
            <person name="Salzberg S.L."/>
            <person name="Schwartz J.R."/>
            <person name="Shinn P."/>
            <person name="Southwick A.M."/>
            <person name="Sun H."/>
            <person name="Tallon L.J."/>
            <person name="Tambunga G."/>
            <person name="Toriumi M.J."/>
            <person name="Town C.D."/>
            <person name="Utterback T."/>
            <person name="Van Aken S."/>
            <person name="Vaysberg M."/>
            <person name="Vysotskaia V.S."/>
            <person name="Walker M."/>
            <person name="Wu D."/>
            <person name="Yu G."/>
            <person name="Fraser C.M."/>
            <person name="Venter J.C."/>
            <person name="Davis R.W."/>
        </authorList>
    </citation>
    <scope>NUCLEOTIDE SEQUENCE [LARGE SCALE GENOMIC DNA]</scope>
    <source>
        <strain>cv. Columbia</strain>
    </source>
</reference>
<reference key="2">
    <citation type="journal article" date="2017" name="Plant J.">
        <title>Araport11: a complete reannotation of the Arabidopsis thaliana reference genome.</title>
        <authorList>
            <person name="Cheng C.Y."/>
            <person name="Krishnakumar V."/>
            <person name="Chan A.P."/>
            <person name="Thibaud-Nissen F."/>
            <person name="Schobel S."/>
            <person name="Town C.D."/>
        </authorList>
    </citation>
    <scope>GENOME REANNOTATION</scope>
    <source>
        <strain>cv. Columbia</strain>
    </source>
</reference>
<reference key="3">
    <citation type="submission" date="2006-04" db="EMBL/GenBank/DDBJ databases">
        <title>Arabidopsis ORF clones.</title>
        <authorList>
            <person name="Shinn P."/>
            <person name="Chen H."/>
            <person name="Kim C.J."/>
            <person name="Ecker J.R."/>
        </authorList>
    </citation>
    <scope>NUCLEOTIDE SEQUENCE [LARGE SCALE MRNA]</scope>
    <source>
        <strain>cv. Columbia</strain>
    </source>
</reference>
<reference key="4">
    <citation type="journal article" date="2017" name="BMC Plant Biol.">
        <title>Divergent regulation of Arabidopsis SAUR genes: a focus on the SAUR10-clade.</title>
        <authorList>
            <person name="van Mourik H."/>
            <person name="van Dijk A.D.J."/>
            <person name="Stortenbeker N."/>
            <person name="Angenent G.C."/>
            <person name="Bemer M."/>
        </authorList>
    </citation>
    <scope>TISSUE SPECIFICITY</scope>
    <scope>DEVELOPMENTAL STAGE</scope>
    <scope>REPRESSION BY ABSCISIC ACID</scope>
    <scope>INDUCTION BY ZEATIN</scope>
    <scope>GENE FAMILY</scope>
    <source>
        <strain>cv. Columbia</strain>
    </source>
</reference>
<evidence type="ECO:0000250" key="1">
    <source>
        <dbReference type="UniProtKB" id="O65648"/>
    </source>
</evidence>
<evidence type="ECO:0000250" key="2">
    <source>
        <dbReference type="UniProtKB" id="Q9FJG1"/>
    </source>
</evidence>
<evidence type="ECO:0000250" key="3">
    <source>
        <dbReference type="UniProtKB" id="Q9SI60"/>
    </source>
</evidence>
<evidence type="ECO:0000269" key="4">
    <source>
    </source>
</evidence>
<evidence type="ECO:0000303" key="5">
    <source>
    </source>
</evidence>
<evidence type="ECO:0000305" key="6"/>
<evidence type="ECO:0000312" key="7">
    <source>
        <dbReference type="Araport" id="AT1G75580"/>
    </source>
</evidence>
<evidence type="ECO:0000312" key="8">
    <source>
        <dbReference type="EMBL" id="AAF87127.1"/>
    </source>
</evidence>
<proteinExistence type="evidence at transcript level"/>
<dbReference type="EMBL" id="AC006434">
    <property type="protein sequence ID" value="AAF87127.1"/>
    <property type="molecule type" value="Genomic_DNA"/>
</dbReference>
<dbReference type="EMBL" id="CP002684">
    <property type="protein sequence ID" value="AEE35735.1"/>
    <property type="molecule type" value="Genomic_DNA"/>
</dbReference>
<dbReference type="EMBL" id="BT025159">
    <property type="protein sequence ID" value="ABE77397.1"/>
    <property type="molecule type" value="mRNA"/>
</dbReference>
<dbReference type="PIR" id="A96786">
    <property type="entry name" value="A96786"/>
</dbReference>
<dbReference type="RefSeq" id="NP_177688.1">
    <property type="nucleotide sequence ID" value="NM_106210.3"/>
</dbReference>
<dbReference type="FunCoup" id="Q9LR00">
    <property type="interactions" value="289"/>
</dbReference>
<dbReference type="STRING" id="3702.Q9LR00"/>
<dbReference type="PaxDb" id="3702-AT1G75580.1"/>
<dbReference type="ProteomicsDB" id="187235"/>
<dbReference type="EnsemblPlants" id="AT1G75580.1">
    <property type="protein sequence ID" value="AT1G75580.1"/>
    <property type="gene ID" value="AT1G75580"/>
</dbReference>
<dbReference type="GeneID" id="843893"/>
<dbReference type="Gramene" id="AT1G75580.1">
    <property type="protein sequence ID" value="AT1G75580.1"/>
    <property type="gene ID" value="AT1G75580"/>
</dbReference>
<dbReference type="KEGG" id="ath:AT1G75580"/>
<dbReference type="Araport" id="AT1G75580"/>
<dbReference type="TAIR" id="AT1G75580">
    <property type="gene designation" value="SAUR51"/>
</dbReference>
<dbReference type="eggNOG" id="ENOG502RZ3M">
    <property type="taxonomic scope" value="Eukaryota"/>
</dbReference>
<dbReference type="HOGENOM" id="CLU_098106_2_3_1"/>
<dbReference type="InParanoid" id="Q9LR00"/>
<dbReference type="OMA" id="CEEMVFQ"/>
<dbReference type="OrthoDB" id="1841988at2759"/>
<dbReference type="PhylomeDB" id="Q9LR00"/>
<dbReference type="PRO" id="PR:Q9LR00"/>
<dbReference type="Proteomes" id="UP000006548">
    <property type="component" value="Chromosome 1"/>
</dbReference>
<dbReference type="ExpressionAtlas" id="Q9LR00">
    <property type="expression patterns" value="baseline and differential"/>
</dbReference>
<dbReference type="GO" id="GO:0005886">
    <property type="term" value="C:plasma membrane"/>
    <property type="evidence" value="ECO:0007669"/>
    <property type="project" value="UniProtKB-SubCell"/>
</dbReference>
<dbReference type="GO" id="GO:0009737">
    <property type="term" value="P:response to abscisic acid"/>
    <property type="evidence" value="ECO:0000270"/>
    <property type="project" value="UniProtKB"/>
</dbReference>
<dbReference type="GO" id="GO:0009733">
    <property type="term" value="P:response to auxin"/>
    <property type="evidence" value="ECO:0007669"/>
    <property type="project" value="InterPro"/>
</dbReference>
<dbReference type="InterPro" id="IPR003676">
    <property type="entry name" value="SAUR_fam"/>
</dbReference>
<dbReference type="PANTHER" id="PTHR31929">
    <property type="entry name" value="SAUR-LIKE AUXIN-RESPONSIVE PROTEIN FAMILY-RELATED"/>
    <property type="match status" value="1"/>
</dbReference>
<dbReference type="Pfam" id="PF02519">
    <property type="entry name" value="Auxin_inducible"/>
    <property type="match status" value="1"/>
</dbReference>
<accession>Q9LR00</accession>
<sequence>MAMKKANKLTQTAMIKQILKRCSSLGKKQSNVYGEDENGSPLNVPKGHFVVYVGENRVRYVVPISFLTRPEFQLLLQQAEEEFGFDHDMGLTIPCEEVVFRSLTSMLR</sequence>
<feature type="chain" id="PRO_0000455148" description="Protein SMALL AUXIN UP-REGULATED RNA 51">
    <location>
        <begin position="1"/>
        <end position="108"/>
    </location>
</feature>
<comment type="function">
    <text evidence="1 3">Provide a mechanistic link between auxin and plasma membrane H(+)-ATPases (PM H(+)-ATPases, e.g. AHA1 and AHA2), and triggers PM H(+)-ATPases activity by promoting phosphorylation of their C-terminal autoinhibitory domain as a result of PP2C-D subfamily of type 2C phosphatases inhibition, thus leading to the acidification of the apoplast and the facilitation of solutes and water uptake to drive cell expansion (By similarity). Triggers plant growth probably by promoting cell elongation (By similarity). Regulates branch angles and bending (By similarity).</text>
</comment>
<comment type="subcellular location">
    <subcellularLocation>
        <location evidence="2">Cell membrane</location>
        <topology evidence="2">Peripheral membrane protein</topology>
    </subcellularLocation>
</comment>
<comment type="tissue specificity">
    <text evidence="4">Expressed in organ primordia (PubMed:29258424). Hardly observed in leaves (PubMed:29258424).</text>
</comment>
<comment type="developmental stage">
    <text evidence="4">Highly active in root primordia, leaf primordia and flower primordia.</text>
</comment>
<comment type="induction">
    <text evidence="4">Induced by zeatin (PubMed:29258424). Repressed by abscisic acid (PubMed:29258424).</text>
</comment>
<comment type="similarity">
    <text evidence="6">Belongs to the ARG7 family.</text>
</comment>
<protein>
    <recommendedName>
        <fullName evidence="5">Protein SMALL AUXIN UP-REGULATED RNA 51</fullName>
    </recommendedName>
</protein>
<keyword id="KW-1003">Cell membrane</keyword>
<keyword id="KW-0217">Developmental protein</keyword>
<keyword id="KW-0341">Growth regulation</keyword>
<keyword id="KW-0472">Membrane</keyword>
<keyword id="KW-1185">Reference proteome</keyword>
<organism>
    <name type="scientific">Arabidopsis thaliana</name>
    <name type="common">Mouse-ear cress</name>
    <dbReference type="NCBI Taxonomy" id="3702"/>
    <lineage>
        <taxon>Eukaryota</taxon>
        <taxon>Viridiplantae</taxon>
        <taxon>Streptophyta</taxon>
        <taxon>Embryophyta</taxon>
        <taxon>Tracheophyta</taxon>
        <taxon>Spermatophyta</taxon>
        <taxon>Magnoliopsida</taxon>
        <taxon>eudicotyledons</taxon>
        <taxon>Gunneridae</taxon>
        <taxon>Pentapetalae</taxon>
        <taxon>rosids</taxon>
        <taxon>malvids</taxon>
        <taxon>Brassicales</taxon>
        <taxon>Brassicaceae</taxon>
        <taxon>Camelineae</taxon>
        <taxon>Arabidopsis</taxon>
    </lineage>
</organism>
<gene>
    <name evidence="5" type="primary">SAUR51</name>
    <name evidence="7" type="ordered locus">At1g75580</name>
    <name evidence="8" type="ORF">F10A5.21</name>
</gene>
<name>SAU51_ARATH</name>